<comment type="function">
    <text evidence="1">Isomerase that catalyzes the conversion of deoxy-ribose 1-phosphate (dRib-1-P) and ribose 1-phosphate (Rib-1-P) to deoxy-ribose 5-phosphate (dRib-5-P) and ribose 5-phosphate (Rib-5-P), respectively.</text>
</comment>
<comment type="catalytic activity">
    <reaction evidence="1">
        <text>2-deoxy-alpha-D-ribose 1-phosphate = 2-deoxy-D-ribose 5-phosphate</text>
        <dbReference type="Rhea" id="RHEA:27658"/>
        <dbReference type="ChEBI" id="CHEBI:57259"/>
        <dbReference type="ChEBI" id="CHEBI:62877"/>
        <dbReference type="EC" id="5.4.2.7"/>
    </reaction>
</comment>
<comment type="catalytic activity">
    <reaction evidence="1">
        <text>alpha-D-ribose 1-phosphate = D-ribose 5-phosphate</text>
        <dbReference type="Rhea" id="RHEA:18793"/>
        <dbReference type="ChEBI" id="CHEBI:57720"/>
        <dbReference type="ChEBI" id="CHEBI:78346"/>
        <dbReference type="EC" id="5.4.2.7"/>
    </reaction>
</comment>
<comment type="cofactor">
    <cofactor evidence="1">
        <name>Mn(2+)</name>
        <dbReference type="ChEBI" id="CHEBI:29035"/>
    </cofactor>
    <text evidence="1">Binds 2 manganese ions.</text>
</comment>
<comment type="pathway">
    <text evidence="1">Carbohydrate degradation; 2-deoxy-D-ribose 1-phosphate degradation; D-glyceraldehyde 3-phosphate and acetaldehyde from 2-deoxy-alpha-D-ribose 1-phosphate: step 1/2.</text>
</comment>
<comment type="subcellular location">
    <subcellularLocation>
        <location evidence="1">Cytoplasm</location>
    </subcellularLocation>
</comment>
<comment type="similarity">
    <text evidence="1">Belongs to the phosphopentomutase family.</text>
</comment>
<feature type="chain" id="PRO_0000258278" description="Phosphopentomutase">
    <location>
        <begin position="1"/>
        <end position="390"/>
    </location>
</feature>
<feature type="binding site" evidence="1">
    <location>
        <position position="10"/>
    </location>
    <ligand>
        <name>Mn(2+)</name>
        <dbReference type="ChEBI" id="CHEBI:29035"/>
        <label>1</label>
    </ligand>
</feature>
<feature type="binding site" evidence="1">
    <location>
        <position position="284"/>
    </location>
    <ligand>
        <name>Mn(2+)</name>
        <dbReference type="ChEBI" id="CHEBI:29035"/>
        <label>2</label>
    </ligand>
</feature>
<feature type="binding site" evidence="1">
    <location>
        <position position="289"/>
    </location>
    <ligand>
        <name>Mn(2+)</name>
        <dbReference type="ChEBI" id="CHEBI:29035"/>
        <label>2</label>
    </ligand>
</feature>
<feature type="binding site" evidence="1">
    <location>
        <position position="325"/>
    </location>
    <ligand>
        <name>Mn(2+)</name>
        <dbReference type="ChEBI" id="CHEBI:29035"/>
        <label>1</label>
    </ligand>
</feature>
<feature type="binding site" evidence="1">
    <location>
        <position position="326"/>
    </location>
    <ligand>
        <name>Mn(2+)</name>
        <dbReference type="ChEBI" id="CHEBI:29035"/>
        <label>1</label>
    </ligand>
</feature>
<feature type="binding site" evidence="1">
    <location>
        <position position="337"/>
    </location>
    <ligand>
        <name>Mn(2+)</name>
        <dbReference type="ChEBI" id="CHEBI:29035"/>
        <label>2</label>
    </ligand>
</feature>
<accession>Q18B86</accession>
<organism>
    <name type="scientific">Clostridioides difficile (strain 630)</name>
    <name type="common">Peptoclostridium difficile</name>
    <dbReference type="NCBI Taxonomy" id="272563"/>
    <lineage>
        <taxon>Bacteria</taxon>
        <taxon>Bacillati</taxon>
        <taxon>Bacillota</taxon>
        <taxon>Clostridia</taxon>
        <taxon>Peptostreptococcales</taxon>
        <taxon>Peptostreptococcaceae</taxon>
        <taxon>Clostridioides</taxon>
    </lineage>
</organism>
<keyword id="KW-0963">Cytoplasm</keyword>
<keyword id="KW-0413">Isomerase</keyword>
<keyword id="KW-0464">Manganese</keyword>
<keyword id="KW-0479">Metal-binding</keyword>
<keyword id="KW-1185">Reference proteome</keyword>
<protein>
    <recommendedName>
        <fullName evidence="1">Phosphopentomutase</fullName>
        <ecNumber evidence="1">5.4.2.7</ecNumber>
    </recommendedName>
    <alternativeName>
        <fullName evidence="1">Phosphodeoxyribomutase</fullName>
    </alternativeName>
</protein>
<sequence length="390" mass="43576">MSRVIWIVIDSVGIGALPDAEKFGDSKDVSTLGNIFKEYPDIQIPNMRNLGIGNIDGIDFFESIKEPIGCFGKCKEMSQGKDTTTGHWEMTGIIVDKPFKTFEHGFSKEIIEEFEKKTGRKVVGNKPASGTVIIDEYGEHQIKTGDVIVYTSADSVFQIAANEEVIPLEELYNMCKIAREIMMGDNAVARVIARPFIGKKKGEFVRTSNRRDYSLDPFEPTVLDNIKESGLDVLAVGKIEDIFNGKGITDAIHTKSNMDGVDETLNYMKQDNKGLIYSNLVDFDSKYGHRRDPEGYKKALEEFDSRLPEIMANMREDDILIINADHGNDPTYKGTDHTREYIPVMIYGNKIKKGFNLGVKDTFADIGATVADILNVKLPKHGSSFKGDLF</sequence>
<proteinExistence type="inferred from homology"/>
<evidence type="ECO:0000255" key="1">
    <source>
        <dbReference type="HAMAP-Rule" id="MF_00740"/>
    </source>
</evidence>
<gene>
    <name evidence="1" type="primary">deoB</name>
    <name type="ordered locus">CD630_12230</name>
</gene>
<reference key="1">
    <citation type="journal article" date="2006" name="Nat. Genet.">
        <title>The multidrug-resistant human pathogen Clostridium difficile has a highly mobile, mosaic genome.</title>
        <authorList>
            <person name="Sebaihia M."/>
            <person name="Wren B.W."/>
            <person name="Mullany P."/>
            <person name="Fairweather N.F."/>
            <person name="Minton N."/>
            <person name="Stabler R."/>
            <person name="Thomson N.R."/>
            <person name="Roberts A.P."/>
            <person name="Cerdeno-Tarraga A.M."/>
            <person name="Wang H."/>
            <person name="Holden M.T.G."/>
            <person name="Wright A."/>
            <person name="Churcher C."/>
            <person name="Quail M.A."/>
            <person name="Baker S."/>
            <person name="Bason N."/>
            <person name="Brooks K."/>
            <person name="Chillingworth T."/>
            <person name="Cronin A."/>
            <person name="Davis P."/>
            <person name="Dowd L."/>
            <person name="Fraser A."/>
            <person name="Feltwell T."/>
            <person name="Hance Z."/>
            <person name="Holroyd S."/>
            <person name="Jagels K."/>
            <person name="Moule S."/>
            <person name="Mungall K."/>
            <person name="Price C."/>
            <person name="Rabbinowitsch E."/>
            <person name="Sharp S."/>
            <person name="Simmonds M."/>
            <person name="Stevens K."/>
            <person name="Unwin L."/>
            <person name="Whithead S."/>
            <person name="Dupuy B."/>
            <person name="Dougan G."/>
            <person name="Barrell B."/>
            <person name="Parkhill J."/>
        </authorList>
    </citation>
    <scope>NUCLEOTIDE SEQUENCE [LARGE SCALE GENOMIC DNA]</scope>
    <source>
        <strain>630</strain>
    </source>
</reference>
<dbReference type="EC" id="5.4.2.7" evidence="1"/>
<dbReference type="EMBL" id="AM180355">
    <property type="protein sequence ID" value="CAJ68077.1"/>
    <property type="molecule type" value="Genomic_DNA"/>
</dbReference>
<dbReference type="RefSeq" id="WP_011861145.1">
    <property type="nucleotide sequence ID" value="NZ_JAUPES010000024.1"/>
</dbReference>
<dbReference type="RefSeq" id="YP_001087716.1">
    <property type="nucleotide sequence ID" value="NC_009089.1"/>
</dbReference>
<dbReference type="SMR" id="Q18B86"/>
<dbReference type="STRING" id="272563.CD630_12230"/>
<dbReference type="EnsemblBacteria" id="CAJ68077">
    <property type="protein sequence ID" value="CAJ68077"/>
    <property type="gene ID" value="CD630_12230"/>
</dbReference>
<dbReference type="KEGG" id="cdf:CD630_12230"/>
<dbReference type="KEGG" id="pdc:CDIF630_01372"/>
<dbReference type="PATRIC" id="fig|272563.120.peg.1274"/>
<dbReference type="eggNOG" id="COG1015">
    <property type="taxonomic scope" value="Bacteria"/>
</dbReference>
<dbReference type="OrthoDB" id="9769930at2"/>
<dbReference type="PhylomeDB" id="Q18B86"/>
<dbReference type="BioCyc" id="PDIF272563:G12WB-1354-MONOMER"/>
<dbReference type="UniPathway" id="UPA00002">
    <property type="reaction ID" value="UER00467"/>
</dbReference>
<dbReference type="Proteomes" id="UP000001978">
    <property type="component" value="Chromosome"/>
</dbReference>
<dbReference type="GO" id="GO:0005829">
    <property type="term" value="C:cytosol"/>
    <property type="evidence" value="ECO:0007669"/>
    <property type="project" value="TreeGrafter"/>
</dbReference>
<dbReference type="GO" id="GO:0000287">
    <property type="term" value="F:magnesium ion binding"/>
    <property type="evidence" value="ECO:0007669"/>
    <property type="project" value="InterPro"/>
</dbReference>
<dbReference type="GO" id="GO:0030145">
    <property type="term" value="F:manganese ion binding"/>
    <property type="evidence" value="ECO:0007669"/>
    <property type="project" value="UniProtKB-UniRule"/>
</dbReference>
<dbReference type="GO" id="GO:0008973">
    <property type="term" value="F:phosphopentomutase activity"/>
    <property type="evidence" value="ECO:0007669"/>
    <property type="project" value="UniProtKB-UniRule"/>
</dbReference>
<dbReference type="GO" id="GO:0006018">
    <property type="term" value="P:2-deoxyribose 1-phosphate catabolic process"/>
    <property type="evidence" value="ECO:0007669"/>
    <property type="project" value="UniProtKB-UniRule"/>
</dbReference>
<dbReference type="GO" id="GO:0006015">
    <property type="term" value="P:5-phosphoribose 1-diphosphate biosynthetic process"/>
    <property type="evidence" value="ECO:0007669"/>
    <property type="project" value="UniProtKB-UniPathway"/>
</dbReference>
<dbReference type="GO" id="GO:0043094">
    <property type="term" value="P:metabolic compound salvage"/>
    <property type="evidence" value="ECO:0007669"/>
    <property type="project" value="InterPro"/>
</dbReference>
<dbReference type="GO" id="GO:0009117">
    <property type="term" value="P:nucleotide metabolic process"/>
    <property type="evidence" value="ECO:0007669"/>
    <property type="project" value="InterPro"/>
</dbReference>
<dbReference type="CDD" id="cd16009">
    <property type="entry name" value="PPM"/>
    <property type="match status" value="1"/>
</dbReference>
<dbReference type="FunFam" id="3.30.70.1250:FF:000001">
    <property type="entry name" value="Phosphopentomutase"/>
    <property type="match status" value="1"/>
</dbReference>
<dbReference type="Gene3D" id="3.40.720.10">
    <property type="entry name" value="Alkaline Phosphatase, subunit A"/>
    <property type="match status" value="1"/>
</dbReference>
<dbReference type="Gene3D" id="3.30.70.1250">
    <property type="entry name" value="Phosphopentomutase"/>
    <property type="match status" value="1"/>
</dbReference>
<dbReference type="HAMAP" id="MF_00740">
    <property type="entry name" value="Phosphopentomut"/>
    <property type="match status" value="1"/>
</dbReference>
<dbReference type="InterPro" id="IPR017850">
    <property type="entry name" value="Alkaline_phosphatase_core_sf"/>
</dbReference>
<dbReference type="InterPro" id="IPR010045">
    <property type="entry name" value="DeoB"/>
</dbReference>
<dbReference type="InterPro" id="IPR006124">
    <property type="entry name" value="Metalloenzyme"/>
</dbReference>
<dbReference type="InterPro" id="IPR024052">
    <property type="entry name" value="Phosphopentomutase_DeoB_cap_sf"/>
</dbReference>
<dbReference type="NCBIfam" id="TIGR01696">
    <property type="entry name" value="deoB"/>
    <property type="match status" value="1"/>
</dbReference>
<dbReference type="NCBIfam" id="NF003766">
    <property type="entry name" value="PRK05362.1"/>
    <property type="match status" value="1"/>
</dbReference>
<dbReference type="PANTHER" id="PTHR21110">
    <property type="entry name" value="PHOSPHOPENTOMUTASE"/>
    <property type="match status" value="1"/>
</dbReference>
<dbReference type="PANTHER" id="PTHR21110:SF0">
    <property type="entry name" value="PHOSPHOPENTOMUTASE"/>
    <property type="match status" value="1"/>
</dbReference>
<dbReference type="Pfam" id="PF01676">
    <property type="entry name" value="Metalloenzyme"/>
    <property type="match status" value="1"/>
</dbReference>
<dbReference type="PIRSF" id="PIRSF001491">
    <property type="entry name" value="Ppentomutase"/>
    <property type="match status" value="1"/>
</dbReference>
<dbReference type="SUPFAM" id="SSF53649">
    <property type="entry name" value="Alkaline phosphatase-like"/>
    <property type="match status" value="1"/>
</dbReference>
<dbReference type="SUPFAM" id="SSF143856">
    <property type="entry name" value="DeoB insert domain-like"/>
    <property type="match status" value="1"/>
</dbReference>
<name>DEOB_CLOD6</name>